<protein>
    <recommendedName>
        <fullName evidence="1">Protein RecA</fullName>
    </recommendedName>
    <alternativeName>
        <fullName evidence="1">Recombinase A</fullName>
    </alternativeName>
</protein>
<organism>
    <name type="scientific">Francisella tularensis subsp. mediasiatica (strain FSC147)</name>
    <dbReference type="NCBI Taxonomy" id="441952"/>
    <lineage>
        <taxon>Bacteria</taxon>
        <taxon>Pseudomonadati</taxon>
        <taxon>Pseudomonadota</taxon>
        <taxon>Gammaproteobacteria</taxon>
        <taxon>Thiotrichales</taxon>
        <taxon>Francisellaceae</taxon>
        <taxon>Francisella</taxon>
    </lineage>
</organism>
<name>RECA_FRATM</name>
<gene>
    <name evidence="1" type="primary">recA</name>
    <name type="ordered locus">FTM_1724</name>
</gene>
<reference key="1">
    <citation type="journal article" date="2009" name="PLoS Pathog.">
        <title>Molecular evolutionary consequences of niche restriction in Francisella tularensis, a facultative intracellular pathogen.</title>
        <authorList>
            <person name="Larsson P."/>
            <person name="Elfsmark D."/>
            <person name="Svensson K."/>
            <person name="Wikstroem P."/>
            <person name="Forsman M."/>
            <person name="Brettin T."/>
            <person name="Keim P."/>
            <person name="Johansson A."/>
        </authorList>
    </citation>
    <scope>NUCLEOTIDE SEQUENCE [LARGE SCALE GENOMIC DNA]</scope>
    <source>
        <strain>FSC147</strain>
    </source>
</reference>
<proteinExistence type="inferred from homology"/>
<evidence type="ECO:0000255" key="1">
    <source>
        <dbReference type="HAMAP-Rule" id="MF_00268"/>
    </source>
</evidence>
<evidence type="ECO:0000256" key="2">
    <source>
        <dbReference type="SAM" id="MobiDB-lite"/>
    </source>
</evidence>
<accession>B2SEE2</accession>
<dbReference type="EMBL" id="CP000915">
    <property type="protein sequence ID" value="ACD31502.1"/>
    <property type="molecule type" value="Genomic_DNA"/>
</dbReference>
<dbReference type="SMR" id="B2SEE2"/>
<dbReference type="KEGG" id="ftm:FTM_1724"/>
<dbReference type="HOGENOM" id="CLU_040469_3_2_6"/>
<dbReference type="GO" id="GO:0005829">
    <property type="term" value="C:cytosol"/>
    <property type="evidence" value="ECO:0007669"/>
    <property type="project" value="TreeGrafter"/>
</dbReference>
<dbReference type="GO" id="GO:0005524">
    <property type="term" value="F:ATP binding"/>
    <property type="evidence" value="ECO:0007669"/>
    <property type="project" value="UniProtKB-UniRule"/>
</dbReference>
<dbReference type="GO" id="GO:0016887">
    <property type="term" value="F:ATP hydrolysis activity"/>
    <property type="evidence" value="ECO:0007669"/>
    <property type="project" value="InterPro"/>
</dbReference>
<dbReference type="GO" id="GO:0140664">
    <property type="term" value="F:ATP-dependent DNA damage sensor activity"/>
    <property type="evidence" value="ECO:0007669"/>
    <property type="project" value="InterPro"/>
</dbReference>
<dbReference type="GO" id="GO:0003684">
    <property type="term" value="F:damaged DNA binding"/>
    <property type="evidence" value="ECO:0007669"/>
    <property type="project" value="UniProtKB-UniRule"/>
</dbReference>
<dbReference type="GO" id="GO:0003697">
    <property type="term" value="F:single-stranded DNA binding"/>
    <property type="evidence" value="ECO:0007669"/>
    <property type="project" value="UniProtKB-UniRule"/>
</dbReference>
<dbReference type="GO" id="GO:0006310">
    <property type="term" value="P:DNA recombination"/>
    <property type="evidence" value="ECO:0007669"/>
    <property type="project" value="UniProtKB-UniRule"/>
</dbReference>
<dbReference type="GO" id="GO:0006281">
    <property type="term" value="P:DNA repair"/>
    <property type="evidence" value="ECO:0007669"/>
    <property type="project" value="UniProtKB-UniRule"/>
</dbReference>
<dbReference type="GO" id="GO:0009432">
    <property type="term" value="P:SOS response"/>
    <property type="evidence" value="ECO:0007669"/>
    <property type="project" value="UniProtKB-UniRule"/>
</dbReference>
<dbReference type="CDD" id="cd00983">
    <property type="entry name" value="RecA"/>
    <property type="match status" value="1"/>
</dbReference>
<dbReference type="FunFam" id="3.40.50.300:FF:000087">
    <property type="entry name" value="Recombinase RecA"/>
    <property type="match status" value="1"/>
</dbReference>
<dbReference type="Gene3D" id="3.40.50.300">
    <property type="entry name" value="P-loop containing nucleotide triphosphate hydrolases"/>
    <property type="match status" value="1"/>
</dbReference>
<dbReference type="HAMAP" id="MF_00268">
    <property type="entry name" value="RecA"/>
    <property type="match status" value="1"/>
</dbReference>
<dbReference type="InterPro" id="IPR003593">
    <property type="entry name" value="AAA+_ATPase"/>
</dbReference>
<dbReference type="InterPro" id="IPR013765">
    <property type="entry name" value="DNA_recomb/repair_RecA"/>
</dbReference>
<dbReference type="InterPro" id="IPR020584">
    <property type="entry name" value="DNA_recomb/repair_RecA_CS"/>
</dbReference>
<dbReference type="InterPro" id="IPR027417">
    <property type="entry name" value="P-loop_NTPase"/>
</dbReference>
<dbReference type="InterPro" id="IPR049261">
    <property type="entry name" value="RecA-like_C"/>
</dbReference>
<dbReference type="InterPro" id="IPR049428">
    <property type="entry name" value="RecA-like_N"/>
</dbReference>
<dbReference type="InterPro" id="IPR020588">
    <property type="entry name" value="RecA_ATP-bd"/>
</dbReference>
<dbReference type="InterPro" id="IPR023400">
    <property type="entry name" value="RecA_C_sf"/>
</dbReference>
<dbReference type="InterPro" id="IPR020587">
    <property type="entry name" value="RecA_monomer-monomer_interface"/>
</dbReference>
<dbReference type="NCBIfam" id="TIGR02012">
    <property type="entry name" value="tigrfam_recA"/>
    <property type="match status" value="1"/>
</dbReference>
<dbReference type="PANTHER" id="PTHR45900:SF1">
    <property type="entry name" value="MITOCHONDRIAL DNA REPAIR PROTEIN RECA HOMOLOG-RELATED"/>
    <property type="match status" value="1"/>
</dbReference>
<dbReference type="PANTHER" id="PTHR45900">
    <property type="entry name" value="RECA"/>
    <property type="match status" value="1"/>
</dbReference>
<dbReference type="Pfam" id="PF00154">
    <property type="entry name" value="RecA"/>
    <property type="match status" value="1"/>
</dbReference>
<dbReference type="Pfam" id="PF21096">
    <property type="entry name" value="RecA_C"/>
    <property type="match status" value="1"/>
</dbReference>
<dbReference type="PRINTS" id="PR00142">
    <property type="entry name" value="RECA"/>
</dbReference>
<dbReference type="SMART" id="SM00382">
    <property type="entry name" value="AAA"/>
    <property type="match status" value="1"/>
</dbReference>
<dbReference type="SUPFAM" id="SSF52540">
    <property type="entry name" value="P-loop containing nucleoside triphosphate hydrolases"/>
    <property type="match status" value="1"/>
</dbReference>
<dbReference type="SUPFAM" id="SSF54752">
    <property type="entry name" value="RecA protein, C-terminal domain"/>
    <property type="match status" value="1"/>
</dbReference>
<dbReference type="PROSITE" id="PS00321">
    <property type="entry name" value="RECA_1"/>
    <property type="match status" value="1"/>
</dbReference>
<dbReference type="PROSITE" id="PS50162">
    <property type="entry name" value="RECA_2"/>
    <property type="match status" value="1"/>
</dbReference>
<dbReference type="PROSITE" id="PS50163">
    <property type="entry name" value="RECA_3"/>
    <property type="match status" value="1"/>
</dbReference>
<feature type="chain" id="PRO_1000114335" description="Protein RecA">
    <location>
        <begin position="1"/>
        <end position="359"/>
    </location>
</feature>
<feature type="region of interest" description="Disordered" evidence="2">
    <location>
        <begin position="329"/>
        <end position="359"/>
    </location>
</feature>
<feature type="compositionally biased region" description="Basic and acidic residues" evidence="2">
    <location>
        <begin position="331"/>
        <end position="344"/>
    </location>
</feature>
<feature type="binding site" evidence="1">
    <location>
        <begin position="64"/>
        <end position="71"/>
    </location>
    <ligand>
        <name>ATP</name>
        <dbReference type="ChEBI" id="CHEBI:30616"/>
    </ligand>
</feature>
<sequence length="359" mass="38834">MSKEKALESALSQIEKQFGKGAIMRLGDQEAAHDIDVIPSGIIALDVALGIGGYPKGRIIEIYGHESSGKTTLTLLAIAQCQKQGGTAAFVDAEHALDPKYAKLLGVDVDNLIVSQPDTGEQALEIADMLVRSGGVDIVVIDSVAALTPKAEIEGDMGDSHMGLQARLMSQALRKLTANIKRSNTLVIFINQIRMKIGVMFGNPETTTGGNALKFYSSVRLEVKKGGSIKDGIDVSGNEIKVKVVKNKVAPPFKQADFELIYGEGISLEAELIDLGAKYNIIEKSGAWYSYKGKKIGQGKEKSKEYLKENTAERDEIERAILELLLPNKYSNKDSNDSPKEGSKIKTKVNPAVTQDELI</sequence>
<keyword id="KW-0067">ATP-binding</keyword>
<keyword id="KW-0963">Cytoplasm</keyword>
<keyword id="KW-0227">DNA damage</keyword>
<keyword id="KW-0233">DNA recombination</keyword>
<keyword id="KW-0234">DNA repair</keyword>
<keyword id="KW-0238">DNA-binding</keyword>
<keyword id="KW-0547">Nucleotide-binding</keyword>
<keyword id="KW-0742">SOS response</keyword>
<comment type="function">
    <text evidence="1">Can catalyze the hydrolysis of ATP in the presence of single-stranded DNA, the ATP-dependent uptake of single-stranded DNA by duplex DNA, and the ATP-dependent hybridization of homologous single-stranded DNAs. It interacts with LexA causing its activation and leading to its autocatalytic cleavage.</text>
</comment>
<comment type="subcellular location">
    <subcellularLocation>
        <location evidence="1">Cytoplasm</location>
    </subcellularLocation>
</comment>
<comment type="similarity">
    <text evidence="1">Belongs to the RecA family.</text>
</comment>